<gene>
    <name type="primary">Cdc37</name>
</gene>
<proteinExistence type="evidence at protein level"/>
<feature type="chain" id="PRO_0000423198" description="Hsp90 co-chaperone Cdc37">
    <location>
        <begin position="1"/>
        <end position="379"/>
    </location>
</feature>
<feature type="initiator methionine" description="Removed; alternate" evidence="1">
    <location>
        <position position="1"/>
    </location>
</feature>
<feature type="chain" id="PRO_0000195058" description="Hsp90 co-chaperone Cdc37, N-terminally processed">
    <location>
        <begin position="2"/>
        <end position="379"/>
    </location>
</feature>
<feature type="region of interest" description="Disordered" evidence="3">
    <location>
        <begin position="124"/>
        <end position="146"/>
    </location>
</feature>
<feature type="region of interest" description="Disordered" evidence="3">
    <location>
        <begin position="344"/>
        <end position="379"/>
    </location>
</feature>
<feature type="modified residue" description="N-acetylmethionine" evidence="1">
    <location>
        <position position="1"/>
    </location>
</feature>
<feature type="modified residue" description="N-acetylvaline; in Hsp90 co-chaperone Cdc37, N-terminally processed" evidence="1">
    <location>
        <position position="2"/>
    </location>
</feature>
<feature type="modified residue" description="Phosphoserine" evidence="1">
    <location>
        <position position="13"/>
    </location>
</feature>
<feature type="modified residue" description="Phosphothreonine" evidence="1">
    <location>
        <position position="119"/>
    </location>
</feature>
<feature type="modified residue" description="Phosphoserine" evidence="1">
    <location>
        <position position="121"/>
    </location>
</feature>
<feature type="modified residue" description="N6-acetyllysine" evidence="1">
    <location>
        <position position="155"/>
    </location>
</feature>
<feature type="modified residue" description="Phosphoserine" evidence="1">
    <location>
        <position position="378"/>
    </location>
</feature>
<reference key="1">
    <citation type="journal article" date="1996" name="Genes Dev.">
        <title>Mammalian p50Cdc37 is a protein kinase-targeting subunit of Hsp90 that binds and stabilizes Cdk4.</title>
        <authorList>
            <person name="Stepanova L."/>
            <person name="Leng X."/>
            <person name="Parker S.B."/>
            <person name="Harper J.W."/>
        </authorList>
    </citation>
    <scope>NUCLEOTIDE SEQUENCE [MRNA]</scope>
    <scope>FUNCTION</scope>
</reference>
<reference key="2">
    <citation type="journal article" date="2005" name="Science">
        <title>The transcriptional landscape of the mammalian genome.</title>
        <authorList>
            <person name="Carninci P."/>
            <person name="Kasukawa T."/>
            <person name="Katayama S."/>
            <person name="Gough J."/>
            <person name="Frith M.C."/>
            <person name="Maeda N."/>
            <person name="Oyama R."/>
            <person name="Ravasi T."/>
            <person name="Lenhard B."/>
            <person name="Wells C."/>
            <person name="Kodzius R."/>
            <person name="Shimokawa K."/>
            <person name="Bajic V.B."/>
            <person name="Brenner S.E."/>
            <person name="Batalov S."/>
            <person name="Forrest A.R."/>
            <person name="Zavolan M."/>
            <person name="Davis M.J."/>
            <person name="Wilming L.G."/>
            <person name="Aidinis V."/>
            <person name="Allen J.E."/>
            <person name="Ambesi-Impiombato A."/>
            <person name="Apweiler R."/>
            <person name="Aturaliya R.N."/>
            <person name="Bailey T.L."/>
            <person name="Bansal M."/>
            <person name="Baxter L."/>
            <person name="Beisel K.W."/>
            <person name="Bersano T."/>
            <person name="Bono H."/>
            <person name="Chalk A.M."/>
            <person name="Chiu K.P."/>
            <person name="Choudhary V."/>
            <person name="Christoffels A."/>
            <person name="Clutterbuck D.R."/>
            <person name="Crowe M.L."/>
            <person name="Dalla E."/>
            <person name="Dalrymple B.P."/>
            <person name="de Bono B."/>
            <person name="Della Gatta G."/>
            <person name="di Bernardo D."/>
            <person name="Down T."/>
            <person name="Engstrom P."/>
            <person name="Fagiolini M."/>
            <person name="Faulkner G."/>
            <person name="Fletcher C.F."/>
            <person name="Fukushima T."/>
            <person name="Furuno M."/>
            <person name="Futaki S."/>
            <person name="Gariboldi M."/>
            <person name="Georgii-Hemming P."/>
            <person name="Gingeras T.R."/>
            <person name="Gojobori T."/>
            <person name="Green R.E."/>
            <person name="Gustincich S."/>
            <person name="Harbers M."/>
            <person name="Hayashi Y."/>
            <person name="Hensch T.K."/>
            <person name="Hirokawa N."/>
            <person name="Hill D."/>
            <person name="Huminiecki L."/>
            <person name="Iacono M."/>
            <person name="Ikeo K."/>
            <person name="Iwama A."/>
            <person name="Ishikawa T."/>
            <person name="Jakt M."/>
            <person name="Kanapin A."/>
            <person name="Katoh M."/>
            <person name="Kawasawa Y."/>
            <person name="Kelso J."/>
            <person name="Kitamura H."/>
            <person name="Kitano H."/>
            <person name="Kollias G."/>
            <person name="Krishnan S.P."/>
            <person name="Kruger A."/>
            <person name="Kummerfeld S.K."/>
            <person name="Kurochkin I.V."/>
            <person name="Lareau L.F."/>
            <person name="Lazarevic D."/>
            <person name="Lipovich L."/>
            <person name="Liu J."/>
            <person name="Liuni S."/>
            <person name="McWilliam S."/>
            <person name="Madan Babu M."/>
            <person name="Madera M."/>
            <person name="Marchionni L."/>
            <person name="Matsuda H."/>
            <person name="Matsuzawa S."/>
            <person name="Miki H."/>
            <person name="Mignone F."/>
            <person name="Miyake S."/>
            <person name="Morris K."/>
            <person name="Mottagui-Tabar S."/>
            <person name="Mulder N."/>
            <person name="Nakano N."/>
            <person name="Nakauchi H."/>
            <person name="Ng P."/>
            <person name="Nilsson R."/>
            <person name="Nishiguchi S."/>
            <person name="Nishikawa S."/>
            <person name="Nori F."/>
            <person name="Ohara O."/>
            <person name="Okazaki Y."/>
            <person name="Orlando V."/>
            <person name="Pang K.C."/>
            <person name="Pavan W.J."/>
            <person name="Pavesi G."/>
            <person name="Pesole G."/>
            <person name="Petrovsky N."/>
            <person name="Piazza S."/>
            <person name="Reed J."/>
            <person name="Reid J.F."/>
            <person name="Ring B.Z."/>
            <person name="Ringwald M."/>
            <person name="Rost B."/>
            <person name="Ruan Y."/>
            <person name="Salzberg S.L."/>
            <person name="Sandelin A."/>
            <person name="Schneider C."/>
            <person name="Schoenbach C."/>
            <person name="Sekiguchi K."/>
            <person name="Semple C.A."/>
            <person name="Seno S."/>
            <person name="Sessa L."/>
            <person name="Sheng Y."/>
            <person name="Shibata Y."/>
            <person name="Shimada H."/>
            <person name="Shimada K."/>
            <person name="Silva D."/>
            <person name="Sinclair B."/>
            <person name="Sperling S."/>
            <person name="Stupka E."/>
            <person name="Sugiura K."/>
            <person name="Sultana R."/>
            <person name="Takenaka Y."/>
            <person name="Taki K."/>
            <person name="Tammoja K."/>
            <person name="Tan S.L."/>
            <person name="Tang S."/>
            <person name="Taylor M.S."/>
            <person name="Tegner J."/>
            <person name="Teichmann S.A."/>
            <person name="Ueda H.R."/>
            <person name="van Nimwegen E."/>
            <person name="Verardo R."/>
            <person name="Wei C.L."/>
            <person name="Yagi K."/>
            <person name="Yamanishi H."/>
            <person name="Zabarovsky E."/>
            <person name="Zhu S."/>
            <person name="Zimmer A."/>
            <person name="Hide W."/>
            <person name="Bult C."/>
            <person name="Grimmond S.M."/>
            <person name="Teasdale R.D."/>
            <person name="Liu E.T."/>
            <person name="Brusic V."/>
            <person name="Quackenbush J."/>
            <person name="Wahlestedt C."/>
            <person name="Mattick J.S."/>
            <person name="Hume D.A."/>
            <person name="Kai C."/>
            <person name="Sasaki D."/>
            <person name="Tomaru Y."/>
            <person name="Fukuda S."/>
            <person name="Kanamori-Katayama M."/>
            <person name="Suzuki M."/>
            <person name="Aoki J."/>
            <person name="Arakawa T."/>
            <person name="Iida J."/>
            <person name="Imamura K."/>
            <person name="Itoh M."/>
            <person name="Kato T."/>
            <person name="Kawaji H."/>
            <person name="Kawagashira N."/>
            <person name="Kawashima T."/>
            <person name="Kojima M."/>
            <person name="Kondo S."/>
            <person name="Konno H."/>
            <person name="Nakano K."/>
            <person name="Ninomiya N."/>
            <person name="Nishio T."/>
            <person name="Okada M."/>
            <person name="Plessy C."/>
            <person name="Shibata K."/>
            <person name="Shiraki T."/>
            <person name="Suzuki S."/>
            <person name="Tagami M."/>
            <person name="Waki K."/>
            <person name="Watahiki A."/>
            <person name="Okamura-Oho Y."/>
            <person name="Suzuki H."/>
            <person name="Kawai J."/>
            <person name="Hayashizaki Y."/>
        </authorList>
    </citation>
    <scope>NUCLEOTIDE SEQUENCE [LARGE SCALE MRNA]</scope>
    <source>
        <strain>C57BL/6J</strain>
        <tissue>Embryo</tissue>
        <tissue>Embryonic stem cell</tissue>
        <tissue>Kidney</tissue>
    </source>
</reference>
<reference key="3">
    <citation type="journal article" date="2004" name="Genome Res.">
        <title>The status, quality, and expansion of the NIH full-length cDNA project: the Mammalian Gene Collection (MGC).</title>
        <authorList>
            <consortium name="The MGC Project Team"/>
        </authorList>
    </citation>
    <scope>NUCLEOTIDE SEQUENCE [LARGE SCALE MRNA]</scope>
    <source>
        <strain>C57BL/6J</strain>
        <tissue>Brain</tissue>
    </source>
</reference>
<reference key="4">
    <citation type="journal article" date="1999" name="Mol. Cell. Biol.">
        <title>Kinase suppressor of Ras forms a multiprotein signaling complex and modulates MEK localization.</title>
        <authorList>
            <person name="Stewart S."/>
            <person name="Sundaram M."/>
            <person name="Zhang Y."/>
            <person name="Lee J."/>
            <person name="Han M."/>
            <person name="Guan K.L."/>
        </authorList>
    </citation>
    <scope>INTERACTION WITH KSR1</scope>
</reference>
<reference key="5">
    <citation type="journal article" date="2010" name="Cell">
        <title>A tissue-specific atlas of mouse protein phosphorylation and expression.</title>
        <authorList>
            <person name="Huttlin E.L."/>
            <person name="Jedrychowski M.P."/>
            <person name="Elias J.E."/>
            <person name="Goswami T."/>
            <person name="Rad R."/>
            <person name="Beausoleil S.A."/>
            <person name="Villen J."/>
            <person name="Haas W."/>
            <person name="Sowa M.E."/>
            <person name="Gygi S.P."/>
        </authorList>
    </citation>
    <scope>IDENTIFICATION BY MASS SPECTROMETRY [LARGE SCALE ANALYSIS]</scope>
    <source>
        <tissue>Brain</tissue>
        <tissue>Brown adipose tissue</tissue>
        <tissue>Heart</tissue>
        <tissue>Kidney</tissue>
        <tissue>Liver</tissue>
        <tissue>Lung</tissue>
        <tissue>Pancreas</tissue>
        <tissue>Spleen</tissue>
        <tissue>Testis</tissue>
    </source>
</reference>
<keyword id="KW-0007">Acetylation</keyword>
<keyword id="KW-0143">Chaperone</keyword>
<keyword id="KW-0963">Cytoplasm</keyword>
<keyword id="KW-0597">Phosphoprotein</keyword>
<keyword id="KW-1185">Reference proteome</keyword>
<keyword id="KW-0832">Ubl conjugation</keyword>
<protein>
    <recommendedName>
        <fullName>Hsp90 co-chaperone Cdc37</fullName>
    </recommendedName>
    <alternativeName>
        <fullName>Hsp90 chaperone protein kinase-targeting subunit</fullName>
    </alternativeName>
    <alternativeName>
        <fullName>p50Cdc37</fullName>
    </alternativeName>
    <component>
        <recommendedName>
            <fullName>Hsp90 co-chaperone Cdc37, N-terminally processed</fullName>
        </recommendedName>
    </component>
</protein>
<comment type="function">
    <text evidence="1 5">Co-chaperone that binds to numerous kinases and promotes their interaction with the Hsp90 complex, resulting in stabilization and promotion of their activity. Inhibits HSP90AA1 ATPase activity (By similarity).</text>
</comment>
<comment type="subunit">
    <text evidence="1 2 4">Probably forms a complex composed of chaperones HSP90 and HSP70, co-chaperones STIP1/HOP, CDC37, PPP5C, PTGES3/p23, TSC1 and client protein TSC2 (By similarity). Probably forms a complex composed of chaperones HSP90 and HSP70, co-chaperones CDC37, PPP5C, TSC1 and client protein TSC2, CDK4, AKT, RAF1 and NR3C1; this complex does not contain co-chaperones STIP1/HOP and PTGES3/p23 (By similarity). Forms a complex with Hsp90/HSP90AB1 and CDK6 (By similarity). Interacts with HSP90AA1 (By similarity). Interacts with AR, CDK4, CDK6 and EIF2AK1 (By similarity). Interacts with RB1 (By similarity). Interacts with KSR1 (PubMed:10409742). Interacts with FLCN, FNIP1 and FNIP2 (By similarity).</text>
</comment>
<comment type="subcellular location">
    <subcellularLocation>
        <location evidence="1">Cytoplasm</location>
    </subcellularLocation>
</comment>
<comment type="PTM">
    <text evidence="1">Constitutively sumoylated by UBE2I.</text>
</comment>
<comment type="similarity">
    <text evidence="6">Belongs to the CDC37 family.</text>
</comment>
<sequence>MVDYSVWDHIEVSDDEDETHPNIDTASLFRWRHQARVERMEQFQKEKEELDRGCRECKRKVAECQRKLKELEVAESDGQVELERLRAEAQQLRKEERSWEQKLEDMRKKEKNMPWNVDTLSKDGFSKSMVNTKPEKAEEDSEEAREQKHKTFVEKYEKQIKHFGMLHRWDDSQKYLSDNVHLVCEETANYLVIWCIDLEVEEKCALMEQVAHQTMVMQFILELAKSLKVDPRACFRQFFTKIKTADHQYMEGFKYELEAFKERVRGRAKLRIEKAMKEYEEEERKKRLGPGGLDPVEVYESLPEELQKCFDVKDVQMLQDAISKMDPTDAKYHMQRCIDSGLWVPNSKSGEAKEGEEAGPGDPLLEAVPKAGNEKDVSA</sequence>
<accession>Q61081</accession>
<accession>Q3TGP0</accession>
<name>CDC37_MOUSE</name>
<organism>
    <name type="scientific">Mus musculus</name>
    <name type="common">Mouse</name>
    <dbReference type="NCBI Taxonomy" id="10090"/>
    <lineage>
        <taxon>Eukaryota</taxon>
        <taxon>Metazoa</taxon>
        <taxon>Chordata</taxon>
        <taxon>Craniata</taxon>
        <taxon>Vertebrata</taxon>
        <taxon>Euteleostomi</taxon>
        <taxon>Mammalia</taxon>
        <taxon>Eutheria</taxon>
        <taxon>Euarchontoglires</taxon>
        <taxon>Glires</taxon>
        <taxon>Rodentia</taxon>
        <taxon>Myomorpha</taxon>
        <taxon>Muroidea</taxon>
        <taxon>Muridae</taxon>
        <taxon>Murinae</taxon>
        <taxon>Mus</taxon>
        <taxon>Mus</taxon>
    </lineage>
</organism>
<dbReference type="EMBL" id="U43076">
    <property type="protein sequence ID" value="AAB18761.1"/>
    <property type="molecule type" value="mRNA"/>
</dbReference>
<dbReference type="EMBL" id="AK010494">
    <property type="protein sequence ID" value="BAB26984.1"/>
    <property type="molecule type" value="mRNA"/>
</dbReference>
<dbReference type="EMBL" id="AK013255">
    <property type="protein sequence ID" value="BAB28749.1"/>
    <property type="molecule type" value="mRNA"/>
</dbReference>
<dbReference type="EMBL" id="AK145671">
    <property type="protein sequence ID" value="BAE26580.1"/>
    <property type="molecule type" value="mRNA"/>
</dbReference>
<dbReference type="EMBL" id="AK168651">
    <property type="protein sequence ID" value="BAE40508.1"/>
    <property type="molecule type" value="mRNA"/>
</dbReference>
<dbReference type="EMBL" id="BC060079">
    <property type="protein sequence ID" value="AAH60079.1"/>
    <property type="molecule type" value="mRNA"/>
</dbReference>
<dbReference type="CCDS" id="CCDS22894.1"/>
<dbReference type="RefSeq" id="NP_058022.1">
    <property type="nucleotide sequence ID" value="NM_016742.5"/>
</dbReference>
<dbReference type="SMR" id="Q61081"/>
<dbReference type="BioGRID" id="198626">
    <property type="interactions" value="73"/>
</dbReference>
<dbReference type="ComplexPortal" id="CPX-3287">
    <property type="entry name" value="HSP90B-CDC37 chaperone complex"/>
</dbReference>
<dbReference type="ComplexPortal" id="CPX-3289">
    <property type="entry name" value="HSP90A-CDC37 chaperone complex"/>
</dbReference>
<dbReference type="FunCoup" id="Q61081">
    <property type="interactions" value="2805"/>
</dbReference>
<dbReference type="IntAct" id="Q61081">
    <property type="interactions" value="23"/>
</dbReference>
<dbReference type="MINT" id="Q61081"/>
<dbReference type="STRING" id="10090.ENSMUSP00000019615"/>
<dbReference type="GlyGen" id="Q61081">
    <property type="glycosylation" value="1 site, 1 O-linked glycan (1 site)"/>
</dbReference>
<dbReference type="iPTMnet" id="Q61081"/>
<dbReference type="MetOSite" id="Q61081"/>
<dbReference type="PhosphoSitePlus" id="Q61081"/>
<dbReference type="SwissPalm" id="Q61081"/>
<dbReference type="jPOST" id="Q61081"/>
<dbReference type="PaxDb" id="10090-ENSMUSP00000019615"/>
<dbReference type="PeptideAtlas" id="Q61081"/>
<dbReference type="ProteomicsDB" id="279991"/>
<dbReference type="Pumba" id="Q61081"/>
<dbReference type="Antibodypedia" id="1136">
    <property type="antibodies" value="587 antibodies from 40 providers"/>
</dbReference>
<dbReference type="DNASU" id="12539"/>
<dbReference type="Ensembl" id="ENSMUST00000019615.11">
    <property type="protein sequence ID" value="ENSMUSP00000019615.10"/>
    <property type="gene ID" value="ENSMUSG00000019471.11"/>
</dbReference>
<dbReference type="GeneID" id="12539"/>
<dbReference type="KEGG" id="mmu:12539"/>
<dbReference type="UCSC" id="uc009okg.1">
    <property type="organism name" value="mouse"/>
</dbReference>
<dbReference type="AGR" id="MGI:109531"/>
<dbReference type="CTD" id="11140"/>
<dbReference type="MGI" id="MGI:109531">
    <property type="gene designation" value="Cdc37"/>
</dbReference>
<dbReference type="VEuPathDB" id="HostDB:ENSMUSG00000019471"/>
<dbReference type="eggNOG" id="KOG2260">
    <property type="taxonomic scope" value="Eukaryota"/>
</dbReference>
<dbReference type="GeneTree" id="ENSGT00390000013443"/>
<dbReference type="HOGENOM" id="CLU_046495_0_0_1"/>
<dbReference type="InParanoid" id="Q61081"/>
<dbReference type="OMA" id="AEQCIII"/>
<dbReference type="OrthoDB" id="440202at2759"/>
<dbReference type="PhylomeDB" id="Q61081"/>
<dbReference type="TreeFam" id="TF101059"/>
<dbReference type="Reactome" id="R-MMU-1227986">
    <property type="pathway name" value="Signaling by ERBB2"/>
</dbReference>
<dbReference type="Reactome" id="R-MMU-5675482">
    <property type="pathway name" value="Regulation of necroptotic cell death"/>
</dbReference>
<dbReference type="Reactome" id="R-MMU-8863795">
    <property type="pathway name" value="Downregulation of ERBB2 signaling"/>
</dbReference>
<dbReference type="Reactome" id="R-MMU-9013418">
    <property type="pathway name" value="RHOBTB2 GTPase cycle"/>
</dbReference>
<dbReference type="Reactome" id="R-MMU-9652282">
    <property type="pathway name" value="Drug-mediated inhibition of ERBB2 signaling"/>
</dbReference>
<dbReference type="BioGRID-ORCS" id="12539">
    <property type="hits" value="28 hits in 79 CRISPR screens"/>
</dbReference>
<dbReference type="ChiTaRS" id="Cdc37">
    <property type="organism name" value="mouse"/>
</dbReference>
<dbReference type="PRO" id="PR:Q61081"/>
<dbReference type="Proteomes" id="UP000000589">
    <property type="component" value="Chromosome 9"/>
</dbReference>
<dbReference type="RNAct" id="Q61081">
    <property type="molecule type" value="protein"/>
</dbReference>
<dbReference type="Bgee" id="ENSMUSG00000019471">
    <property type="expression patterns" value="Expressed in maxillary prominence and 259 other cell types or tissues"/>
</dbReference>
<dbReference type="ExpressionAtlas" id="Q61081">
    <property type="expression patterns" value="baseline and differential"/>
</dbReference>
<dbReference type="GO" id="GO:0005829">
    <property type="term" value="C:cytosol"/>
    <property type="evidence" value="ECO:0000314"/>
    <property type="project" value="MGI"/>
</dbReference>
<dbReference type="GO" id="GO:1990565">
    <property type="term" value="C:HSP90-CDC37 chaperone complex"/>
    <property type="evidence" value="ECO:0000314"/>
    <property type="project" value="ParkinsonsUK-UCL"/>
</dbReference>
<dbReference type="GO" id="GO:0051879">
    <property type="term" value="F:Hsp90 protein binding"/>
    <property type="evidence" value="ECO:0000314"/>
    <property type="project" value="MGI"/>
</dbReference>
<dbReference type="GO" id="GO:0019900">
    <property type="term" value="F:kinase binding"/>
    <property type="evidence" value="ECO:0000353"/>
    <property type="project" value="ParkinsonsUK-UCL"/>
</dbReference>
<dbReference type="GO" id="GO:0019901">
    <property type="term" value="F:protein kinase binding"/>
    <property type="evidence" value="ECO:0007669"/>
    <property type="project" value="InterPro"/>
</dbReference>
<dbReference type="GO" id="GO:0097110">
    <property type="term" value="F:scaffold protein binding"/>
    <property type="evidence" value="ECO:0007669"/>
    <property type="project" value="Ensembl"/>
</dbReference>
<dbReference type="GO" id="GO:1905091">
    <property type="term" value="P:positive regulation of type 2 mitophagy"/>
    <property type="evidence" value="ECO:0000314"/>
    <property type="project" value="ParkinsonsUK-UCL"/>
</dbReference>
<dbReference type="GO" id="GO:0010608">
    <property type="term" value="P:post-transcriptional regulation of gene expression"/>
    <property type="evidence" value="ECO:0000314"/>
    <property type="project" value="ParkinsonsUK-UCL"/>
</dbReference>
<dbReference type="GO" id="GO:0045859">
    <property type="term" value="P:regulation of protein kinase activity"/>
    <property type="evidence" value="ECO:0000314"/>
    <property type="project" value="ParkinsonsUK-UCL"/>
</dbReference>
<dbReference type="GO" id="GO:0060338">
    <property type="term" value="P:regulation of type I interferon-mediated signaling pathway"/>
    <property type="evidence" value="ECO:0000266"/>
    <property type="project" value="MGI"/>
</dbReference>
<dbReference type="GO" id="GO:0060334">
    <property type="term" value="P:regulation of type II interferon-mediated signaling pathway"/>
    <property type="evidence" value="ECO:0000266"/>
    <property type="project" value="MGI"/>
</dbReference>
<dbReference type="FunFam" id="1.20.58.610:FF:000001">
    <property type="entry name" value="Hsp90 co-chaperone Cdc37-like 1"/>
    <property type="match status" value="1"/>
</dbReference>
<dbReference type="Gene3D" id="6.10.140.250">
    <property type="match status" value="1"/>
</dbReference>
<dbReference type="Gene3D" id="1.20.58.610">
    <property type="entry name" value="Cdc37, Hsp90 binding domain"/>
    <property type="match status" value="1"/>
</dbReference>
<dbReference type="InterPro" id="IPR004918">
    <property type="entry name" value="Cdc37"/>
</dbReference>
<dbReference type="InterPro" id="IPR013873">
    <property type="entry name" value="Cdc37_C"/>
</dbReference>
<dbReference type="InterPro" id="IPR013874">
    <property type="entry name" value="Cdc37_Hsp90-bd"/>
</dbReference>
<dbReference type="InterPro" id="IPR038189">
    <property type="entry name" value="Cdc37_Hsp90-bd_sf"/>
</dbReference>
<dbReference type="InterPro" id="IPR013855">
    <property type="entry name" value="Cdc37_N_dom"/>
</dbReference>
<dbReference type="PANTHER" id="PTHR12800">
    <property type="entry name" value="CDC37-RELATED"/>
    <property type="match status" value="1"/>
</dbReference>
<dbReference type="PANTHER" id="PTHR12800:SF3">
    <property type="entry name" value="HSP90 CO-CHAPERONE CDC37"/>
    <property type="match status" value="1"/>
</dbReference>
<dbReference type="Pfam" id="PF08564">
    <property type="entry name" value="CDC37_C"/>
    <property type="match status" value="1"/>
</dbReference>
<dbReference type="Pfam" id="PF08565">
    <property type="entry name" value="CDC37_M"/>
    <property type="match status" value="1"/>
</dbReference>
<dbReference type="Pfam" id="PF03234">
    <property type="entry name" value="CDC37_N"/>
    <property type="match status" value="1"/>
</dbReference>
<dbReference type="SMART" id="SM01069">
    <property type="entry name" value="CDC37_C"/>
    <property type="match status" value="1"/>
</dbReference>
<dbReference type="SMART" id="SM01070">
    <property type="entry name" value="CDC37_M"/>
    <property type="match status" value="1"/>
</dbReference>
<dbReference type="SMART" id="SM01071">
    <property type="entry name" value="CDC37_N"/>
    <property type="match status" value="1"/>
</dbReference>
<dbReference type="SUPFAM" id="SSF101391">
    <property type="entry name" value="Hsp90 co-chaperone CDC37"/>
    <property type="match status" value="1"/>
</dbReference>
<evidence type="ECO:0000250" key="1">
    <source>
        <dbReference type="UniProtKB" id="Q16543"/>
    </source>
</evidence>
<evidence type="ECO:0000250" key="2">
    <source>
        <dbReference type="UniProtKB" id="Q63692"/>
    </source>
</evidence>
<evidence type="ECO:0000256" key="3">
    <source>
        <dbReference type="SAM" id="MobiDB-lite"/>
    </source>
</evidence>
<evidence type="ECO:0000269" key="4">
    <source>
    </source>
</evidence>
<evidence type="ECO:0000269" key="5">
    <source>
    </source>
</evidence>
<evidence type="ECO:0000305" key="6"/>